<sequence>MSGNTFGKIFTVTTCGESHGDSLAAIIDGCPSNIPLCEADIQLELDRRKPGQSKFTTQRKEPDEVKIISGVFEGKTTGTPIGLIIKNQDQKSKDYSEIKDKFRPGHADYTYFKKYGIRDYRGGGRSSARETAMRVAAGAIAKKILKHYGIEIYGFCSQIGSLKIDFIDKDFINQNPFFIANKNAVPACEDLIHSIRKQGDSIGAEVTVVATGLEAGLGRPVFDRLDASIAYAMMSINAVKAVSIGDGFDCVTQKGSQHRDEITQQQGFLSNHAGGILGGISTGQDIIAKLAFKPTSSILQPGKSIDVQGNDTTVITKGRHDPCVGIRGVPIAEAMLALVLVDELLITRSYRD</sequence>
<keyword id="KW-0028">Amino-acid biosynthesis</keyword>
<keyword id="KW-0057">Aromatic amino acid biosynthesis</keyword>
<keyword id="KW-0274">FAD</keyword>
<keyword id="KW-0285">Flavoprotein</keyword>
<keyword id="KW-0288">FMN</keyword>
<keyword id="KW-0456">Lyase</keyword>
<keyword id="KW-0521">NADP</keyword>
<proteinExistence type="inferred from homology"/>
<dbReference type="EC" id="4.2.3.5" evidence="1"/>
<dbReference type="EMBL" id="CP000915">
    <property type="protein sequence ID" value="ACD30486.1"/>
    <property type="molecule type" value="Genomic_DNA"/>
</dbReference>
<dbReference type="SMR" id="B2SF54"/>
<dbReference type="KEGG" id="ftm:FTM_0465"/>
<dbReference type="HOGENOM" id="CLU_034547_0_2_6"/>
<dbReference type="UniPathway" id="UPA00053">
    <property type="reaction ID" value="UER00090"/>
</dbReference>
<dbReference type="GO" id="GO:0005829">
    <property type="term" value="C:cytosol"/>
    <property type="evidence" value="ECO:0007669"/>
    <property type="project" value="TreeGrafter"/>
</dbReference>
<dbReference type="GO" id="GO:0004107">
    <property type="term" value="F:chorismate synthase activity"/>
    <property type="evidence" value="ECO:0007669"/>
    <property type="project" value="UniProtKB-UniRule"/>
</dbReference>
<dbReference type="GO" id="GO:0010181">
    <property type="term" value="F:FMN binding"/>
    <property type="evidence" value="ECO:0007669"/>
    <property type="project" value="TreeGrafter"/>
</dbReference>
<dbReference type="GO" id="GO:0008652">
    <property type="term" value="P:amino acid biosynthetic process"/>
    <property type="evidence" value="ECO:0007669"/>
    <property type="project" value="UniProtKB-KW"/>
</dbReference>
<dbReference type="GO" id="GO:0009073">
    <property type="term" value="P:aromatic amino acid family biosynthetic process"/>
    <property type="evidence" value="ECO:0007669"/>
    <property type="project" value="UniProtKB-KW"/>
</dbReference>
<dbReference type="GO" id="GO:0009423">
    <property type="term" value="P:chorismate biosynthetic process"/>
    <property type="evidence" value="ECO:0007669"/>
    <property type="project" value="UniProtKB-UniRule"/>
</dbReference>
<dbReference type="CDD" id="cd07304">
    <property type="entry name" value="Chorismate_synthase"/>
    <property type="match status" value="1"/>
</dbReference>
<dbReference type="Gene3D" id="3.60.150.10">
    <property type="entry name" value="Chorismate synthase AroC"/>
    <property type="match status" value="1"/>
</dbReference>
<dbReference type="HAMAP" id="MF_00300">
    <property type="entry name" value="Chorismate_synth"/>
    <property type="match status" value="1"/>
</dbReference>
<dbReference type="InterPro" id="IPR000453">
    <property type="entry name" value="Chorismate_synth"/>
</dbReference>
<dbReference type="InterPro" id="IPR035904">
    <property type="entry name" value="Chorismate_synth_AroC_sf"/>
</dbReference>
<dbReference type="InterPro" id="IPR020541">
    <property type="entry name" value="Chorismate_synthase_CS"/>
</dbReference>
<dbReference type="NCBIfam" id="TIGR00033">
    <property type="entry name" value="aroC"/>
    <property type="match status" value="1"/>
</dbReference>
<dbReference type="NCBIfam" id="NF003793">
    <property type="entry name" value="PRK05382.1"/>
    <property type="match status" value="1"/>
</dbReference>
<dbReference type="PANTHER" id="PTHR21085">
    <property type="entry name" value="CHORISMATE SYNTHASE"/>
    <property type="match status" value="1"/>
</dbReference>
<dbReference type="PANTHER" id="PTHR21085:SF0">
    <property type="entry name" value="CHORISMATE SYNTHASE"/>
    <property type="match status" value="1"/>
</dbReference>
<dbReference type="Pfam" id="PF01264">
    <property type="entry name" value="Chorismate_synt"/>
    <property type="match status" value="1"/>
</dbReference>
<dbReference type="PIRSF" id="PIRSF001456">
    <property type="entry name" value="Chorismate_synth"/>
    <property type="match status" value="1"/>
</dbReference>
<dbReference type="SUPFAM" id="SSF103263">
    <property type="entry name" value="Chorismate synthase, AroC"/>
    <property type="match status" value="1"/>
</dbReference>
<dbReference type="PROSITE" id="PS00787">
    <property type="entry name" value="CHORISMATE_SYNTHASE_1"/>
    <property type="match status" value="1"/>
</dbReference>
<dbReference type="PROSITE" id="PS00788">
    <property type="entry name" value="CHORISMATE_SYNTHASE_2"/>
    <property type="match status" value="1"/>
</dbReference>
<dbReference type="PROSITE" id="PS00789">
    <property type="entry name" value="CHORISMATE_SYNTHASE_3"/>
    <property type="match status" value="1"/>
</dbReference>
<reference key="1">
    <citation type="journal article" date="2009" name="PLoS Pathog.">
        <title>Molecular evolutionary consequences of niche restriction in Francisella tularensis, a facultative intracellular pathogen.</title>
        <authorList>
            <person name="Larsson P."/>
            <person name="Elfsmark D."/>
            <person name="Svensson K."/>
            <person name="Wikstroem P."/>
            <person name="Forsman M."/>
            <person name="Brettin T."/>
            <person name="Keim P."/>
            <person name="Johansson A."/>
        </authorList>
    </citation>
    <scope>NUCLEOTIDE SEQUENCE [LARGE SCALE GENOMIC DNA]</scope>
    <source>
        <strain>FSC147</strain>
    </source>
</reference>
<organism>
    <name type="scientific">Francisella tularensis subsp. mediasiatica (strain FSC147)</name>
    <dbReference type="NCBI Taxonomy" id="441952"/>
    <lineage>
        <taxon>Bacteria</taxon>
        <taxon>Pseudomonadati</taxon>
        <taxon>Pseudomonadota</taxon>
        <taxon>Gammaproteobacteria</taxon>
        <taxon>Thiotrichales</taxon>
        <taxon>Francisellaceae</taxon>
        <taxon>Francisella</taxon>
    </lineage>
</organism>
<gene>
    <name evidence="1" type="primary">aroC</name>
    <name type="ordered locus">FTM_0465</name>
</gene>
<feature type="chain" id="PRO_1000115354" description="Chorismate synthase">
    <location>
        <begin position="1"/>
        <end position="352"/>
    </location>
</feature>
<feature type="binding site" evidence="1">
    <location>
        <position position="48"/>
    </location>
    <ligand>
        <name>NADP(+)</name>
        <dbReference type="ChEBI" id="CHEBI:58349"/>
    </ligand>
</feature>
<feature type="binding site" evidence="1">
    <location>
        <begin position="125"/>
        <end position="127"/>
    </location>
    <ligand>
        <name>FMN</name>
        <dbReference type="ChEBI" id="CHEBI:58210"/>
    </ligand>
</feature>
<feature type="binding site" evidence="1">
    <location>
        <begin position="237"/>
        <end position="238"/>
    </location>
    <ligand>
        <name>FMN</name>
        <dbReference type="ChEBI" id="CHEBI:58210"/>
    </ligand>
</feature>
<feature type="binding site" evidence="1">
    <location>
        <position position="278"/>
    </location>
    <ligand>
        <name>FMN</name>
        <dbReference type="ChEBI" id="CHEBI:58210"/>
    </ligand>
</feature>
<feature type="binding site" evidence="1">
    <location>
        <begin position="293"/>
        <end position="297"/>
    </location>
    <ligand>
        <name>FMN</name>
        <dbReference type="ChEBI" id="CHEBI:58210"/>
    </ligand>
</feature>
<feature type="binding site" evidence="1">
    <location>
        <position position="319"/>
    </location>
    <ligand>
        <name>FMN</name>
        <dbReference type="ChEBI" id="CHEBI:58210"/>
    </ligand>
</feature>
<accession>B2SF54</accession>
<comment type="function">
    <text evidence="1">Catalyzes the anti-1,4-elimination of the C-3 phosphate and the C-6 proR hydrogen from 5-enolpyruvylshikimate-3-phosphate (EPSP) to yield chorismate, which is the branch point compound that serves as the starting substrate for the three terminal pathways of aromatic amino acid biosynthesis. This reaction introduces a second double bond into the aromatic ring system.</text>
</comment>
<comment type="catalytic activity">
    <reaction evidence="1">
        <text>5-O-(1-carboxyvinyl)-3-phosphoshikimate = chorismate + phosphate</text>
        <dbReference type="Rhea" id="RHEA:21020"/>
        <dbReference type="ChEBI" id="CHEBI:29748"/>
        <dbReference type="ChEBI" id="CHEBI:43474"/>
        <dbReference type="ChEBI" id="CHEBI:57701"/>
        <dbReference type="EC" id="4.2.3.5"/>
    </reaction>
</comment>
<comment type="cofactor">
    <cofactor evidence="1">
        <name>FMNH2</name>
        <dbReference type="ChEBI" id="CHEBI:57618"/>
    </cofactor>
    <text evidence="1">Reduced FMN (FMNH(2)).</text>
</comment>
<comment type="pathway">
    <text evidence="1">Metabolic intermediate biosynthesis; chorismate biosynthesis; chorismate from D-erythrose 4-phosphate and phosphoenolpyruvate: step 7/7.</text>
</comment>
<comment type="subunit">
    <text evidence="1">Homotetramer.</text>
</comment>
<comment type="similarity">
    <text evidence="1">Belongs to the chorismate synthase family.</text>
</comment>
<name>AROC_FRATM</name>
<evidence type="ECO:0000255" key="1">
    <source>
        <dbReference type="HAMAP-Rule" id="MF_00300"/>
    </source>
</evidence>
<protein>
    <recommendedName>
        <fullName evidence="1">Chorismate synthase</fullName>
        <shortName evidence="1">CS</shortName>
        <ecNumber evidence="1">4.2.3.5</ecNumber>
    </recommendedName>
    <alternativeName>
        <fullName evidence="1">5-enolpyruvylshikimate-3-phosphate phospholyase</fullName>
    </alternativeName>
</protein>